<name>MPC2_HUMAN</name>
<gene>
    <name type="primary">MPC2</name>
    <name type="synonym">BRP44</name>
</gene>
<accession>O95563</accession>
<accession>A8K261</accession>
<accession>Q3SXR6</accession>
<accession>Q6FIF3</accession>
<evidence type="ECO:0000255" key="1"/>
<evidence type="ECO:0000269" key="2">
    <source>
    </source>
</evidence>
<evidence type="ECO:0000269" key="3">
    <source>
    </source>
</evidence>
<evidence type="ECO:0000269" key="4">
    <source>
    </source>
</evidence>
<evidence type="ECO:0000269" key="5">
    <source>
    </source>
</evidence>
<evidence type="ECO:0000269" key="6">
    <source>
    </source>
</evidence>
<evidence type="ECO:0000305" key="7"/>
<evidence type="ECO:0000305" key="8">
    <source>
    </source>
</evidence>
<comment type="function">
    <text evidence="2 3 4 5">Mediates the uptake of pyruvate into mitochondria.</text>
</comment>
<comment type="catalytic activity">
    <reaction evidence="2 3 4 5">
        <text>pyruvate(out) + H(+)(out) = pyruvate(in) + H(+)(in)</text>
        <dbReference type="Rhea" id="RHEA:64720"/>
        <dbReference type="ChEBI" id="CHEBI:15361"/>
        <dbReference type="ChEBI" id="CHEBI:15378"/>
    </reaction>
</comment>
<comment type="biophysicochemical properties">
    <kinetics>
        <KM evidence="5">1.1 mM for pyruvate</KM>
    </kinetics>
</comment>
<comment type="subunit">
    <text evidence="3 5 6">Homodimer (PubMed:32403431). Homooligomer (PubMed:29472561). Forms heterodimers with MPC1 and MPC1L. The heterodimer is the more stable and dominant form (PubMed:26253029, PubMed:32403431).</text>
</comment>
<comment type="interaction">
    <interactant intactId="EBI-719403">
        <id>O95563</id>
    </interactant>
    <interactant intactId="EBI-1220105">
        <id>P02654</id>
        <label>APOC1</label>
    </interactant>
    <organismsDiffer>false</organismsDiffer>
    <experiments>3</experiments>
</comment>
<comment type="interaction">
    <interactant intactId="EBI-719403">
        <id>O95563</id>
    </interactant>
    <interactant intactId="EBI-2837444">
        <id>Q8WUW1</id>
        <label>BRK1</label>
    </interactant>
    <organismsDiffer>false</organismsDiffer>
    <experiments>3</experiments>
</comment>
<comment type="interaction">
    <interactant intactId="EBI-719403">
        <id>O95563</id>
    </interactant>
    <interactant intactId="EBI-7062247">
        <id>Q9UHD4</id>
        <label>CIDEB</label>
    </interactant>
    <organismsDiffer>false</organismsDiffer>
    <experiments>3</experiments>
</comment>
<comment type="interaction">
    <interactant intactId="EBI-719403">
        <id>O95563</id>
    </interactant>
    <interactant intactId="EBI-517508">
        <id>Q9NR28</id>
        <label>DIABLO</label>
    </interactant>
    <organismsDiffer>false</organismsDiffer>
    <experiments>3</experiments>
</comment>
<comment type="interaction">
    <interactant intactId="EBI-719403">
        <id>O95563</id>
    </interactant>
    <interactant intactId="EBI-6896746">
        <id>O00429-3</id>
        <label>DNM1L</label>
    </interactant>
    <organismsDiffer>false</organismsDiffer>
    <experiments>3</experiments>
</comment>
<comment type="interaction">
    <interactant intactId="EBI-719403">
        <id>O95563</id>
    </interactant>
    <interactant intactId="EBI-750300">
        <id>Q01658</id>
        <label>DR1</label>
    </interactant>
    <organismsDiffer>false</organismsDiffer>
    <experiments>3</experiments>
</comment>
<comment type="interaction">
    <interactant intactId="EBI-719403">
        <id>O95563</id>
    </interactant>
    <interactant intactId="EBI-5280572">
        <id>P29692-2</id>
        <label>EEF1D</label>
    </interactant>
    <organismsDiffer>false</organismsDiffer>
    <experiments>3</experiments>
</comment>
<comment type="interaction">
    <interactant intactId="EBI-719403">
        <id>O95563</id>
    </interactant>
    <interactant intactId="EBI-1054873">
        <id>Q9Y5Q9</id>
        <label>GTF3C3</label>
    </interactant>
    <organismsDiffer>false</organismsDiffer>
    <experiments>3</experiments>
</comment>
<comment type="interaction">
    <interactant intactId="EBI-719403">
        <id>O95563</id>
    </interactant>
    <interactant intactId="EBI-12886442">
        <id>Q5TGZ0</id>
        <label>MICOS10</label>
    </interactant>
    <organismsDiffer>false</organismsDiffer>
    <experiments>3</experiments>
</comment>
<comment type="interaction">
    <interactant intactId="EBI-719403">
        <id>O95563</id>
    </interactant>
    <interactant intactId="EBI-721137">
        <id>Q9Y5U8</id>
        <label>MPC1</label>
    </interactant>
    <organismsDiffer>false</organismsDiffer>
    <experiments>9</experiments>
</comment>
<comment type="interaction">
    <interactant intactId="EBI-719403">
        <id>O95563</id>
    </interactant>
    <interactant intactId="EBI-44454819">
        <id>P0DKB6</id>
        <label>MPC1L</label>
    </interactant>
    <organismsDiffer>false</organismsDiffer>
    <experiments>4</experiments>
</comment>
<comment type="interaction">
    <interactant intactId="EBI-719403">
        <id>O95563</id>
    </interactant>
    <interactant intactId="EBI-719403">
        <id>O95563</id>
        <label>MPC2</label>
    </interactant>
    <organismsDiffer>false</organismsDiffer>
    <experiments>3</experiments>
</comment>
<comment type="interaction">
    <interactant intactId="EBI-719403">
        <id>O95563</id>
    </interactant>
    <interactant intactId="EBI-17589229">
        <id>Q6NTF9-3</id>
        <label>RHBDD2</label>
    </interactant>
    <organismsDiffer>false</organismsDiffer>
    <experiments>3</experiments>
</comment>
<comment type="interaction">
    <interactant intactId="EBI-719403">
        <id>O95563</id>
    </interactant>
    <interactant intactId="EBI-2822329">
        <id>Q13596</id>
        <label>SNX1</label>
    </interactant>
    <organismsDiffer>false</organismsDiffer>
    <experiments>3</experiments>
</comment>
<comment type="interaction">
    <interactant intactId="EBI-719403">
        <id>O95563</id>
    </interactant>
    <interactant intactId="EBI-742688">
        <id>Q9NZD8</id>
        <label>SPG21</label>
    </interactant>
    <organismsDiffer>false</organismsDiffer>
    <experiments>3</experiments>
</comment>
<comment type="interaction">
    <interactant intactId="EBI-719403">
        <id>O95563</id>
    </interactant>
    <interactant intactId="EBI-10238936">
        <id>Q17RD7</id>
        <label>SYT16</label>
    </interactant>
    <organismsDiffer>false</organismsDiffer>
    <experiments>3</experiments>
</comment>
<comment type="interaction">
    <interactant intactId="EBI-719403">
        <id>O95563</id>
    </interactant>
    <interactant intactId="EBI-10278496">
        <id>Q53QW1</id>
        <label>TEX44</label>
    </interactant>
    <organismsDiffer>false</organismsDiffer>
    <experiments>3</experiments>
</comment>
<comment type="interaction">
    <interactant intactId="EBI-719403">
        <id>O95563</id>
    </interactant>
    <interactant intactId="EBI-2372529">
        <id>O60830</id>
        <label>TIMM17B</label>
    </interactant>
    <organismsDiffer>false</organismsDiffer>
    <experiments>3</experiments>
</comment>
<comment type="subcellular location">
    <subcellularLocation>
        <location evidence="2 3 5">Mitochondrion inner membrane</location>
        <topology evidence="1">Multi-pass membrane protein</topology>
    </subcellularLocation>
</comment>
<comment type="similarity">
    <text evidence="7">Belongs to the mitochondrial pyruvate carrier (MPC) (TC 2.A.105) family.</text>
</comment>
<dbReference type="EMBL" id="AL035304">
    <property type="protein sequence ID" value="CAA22909.1"/>
    <property type="molecule type" value="mRNA"/>
</dbReference>
<dbReference type="EMBL" id="AL110297">
    <property type="protein sequence ID" value="CAB53738.1"/>
    <property type="molecule type" value="mRNA"/>
</dbReference>
<dbReference type="EMBL" id="AK290126">
    <property type="protein sequence ID" value="BAF82815.1"/>
    <property type="molecule type" value="mRNA"/>
</dbReference>
<dbReference type="EMBL" id="CR407632">
    <property type="protein sequence ID" value="CAG28560.1"/>
    <property type="molecule type" value="mRNA"/>
</dbReference>
<dbReference type="EMBL" id="CR533473">
    <property type="protein sequence ID" value="CAG38504.1"/>
    <property type="molecule type" value="mRNA"/>
</dbReference>
<dbReference type="EMBL" id="Z97876">
    <property type="status" value="NOT_ANNOTATED_CDS"/>
    <property type="molecule type" value="Genomic_DNA"/>
</dbReference>
<dbReference type="EMBL" id="CH471067">
    <property type="protein sequence ID" value="EAW90814.1"/>
    <property type="molecule type" value="Genomic_DNA"/>
</dbReference>
<dbReference type="EMBL" id="BC104157">
    <property type="protein sequence ID" value="AAI04158.1"/>
    <property type="molecule type" value="mRNA"/>
</dbReference>
<dbReference type="EMBL" id="BC104158">
    <property type="protein sequence ID" value="AAI04159.1"/>
    <property type="molecule type" value="mRNA"/>
</dbReference>
<dbReference type="CCDS" id="CCDS1266.1"/>
<dbReference type="PIR" id="T14797">
    <property type="entry name" value="T14797"/>
</dbReference>
<dbReference type="RefSeq" id="NP_001137146.1">
    <property type="nucleotide sequence ID" value="NM_001143674.4"/>
</dbReference>
<dbReference type="RefSeq" id="NP_056230.1">
    <property type="nucleotide sequence ID" value="NM_015415.3"/>
</dbReference>
<dbReference type="RefSeq" id="XP_006711329.1">
    <property type="nucleotide sequence ID" value="XM_006711266.4"/>
</dbReference>
<dbReference type="RefSeq" id="XP_054191831.1">
    <property type="nucleotide sequence ID" value="XM_054335856.1"/>
</dbReference>
<dbReference type="PDB" id="8YW6">
    <property type="method" value="EM"/>
    <property type="resolution" value="3.18 A"/>
    <property type="chains" value="B=1-127"/>
</dbReference>
<dbReference type="PDB" id="8YW8">
    <property type="method" value="EM"/>
    <property type="resolution" value="3.17 A"/>
    <property type="chains" value="B=1-127"/>
</dbReference>
<dbReference type="PDB" id="8YW9">
    <property type="method" value="EM"/>
    <property type="resolution" value="3.01 A"/>
    <property type="chains" value="B=1-127"/>
</dbReference>
<dbReference type="PDB" id="9KNW">
    <property type="method" value="EM"/>
    <property type="resolution" value="3.41 A"/>
    <property type="chains" value="B=1-127"/>
</dbReference>
<dbReference type="PDB" id="9KNX">
    <property type="method" value="EM"/>
    <property type="resolution" value="3.72 A"/>
    <property type="chains" value="B=1-127"/>
</dbReference>
<dbReference type="PDB" id="9KNY">
    <property type="method" value="EM"/>
    <property type="resolution" value="3.40 A"/>
    <property type="chains" value="B=1-127"/>
</dbReference>
<dbReference type="PDB" id="9MNW">
    <property type="method" value="EM"/>
    <property type="resolution" value="3.35 A"/>
    <property type="chains" value="B=1-127"/>
</dbReference>
<dbReference type="PDB" id="9MNX">
    <property type="method" value="EM"/>
    <property type="resolution" value="3.11 A"/>
    <property type="chains" value="B=1-127"/>
</dbReference>
<dbReference type="PDB" id="9MNY">
    <property type="method" value="EM"/>
    <property type="resolution" value="2.78 A"/>
    <property type="chains" value="B=1-127"/>
</dbReference>
<dbReference type="PDB" id="9MNZ">
    <property type="method" value="EM"/>
    <property type="resolution" value="2.73 A"/>
    <property type="chains" value="B=1-127"/>
</dbReference>
<dbReference type="PDB" id="9MO0">
    <property type="method" value="EM"/>
    <property type="resolution" value="2.83 A"/>
    <property type="chains" value="B=1-127"/>
</dbReference>
<dbReference type="PDBsum" id="8YW6"/>
<dbReference type="PDBsum" id="8YW8"/>
<dbReference type="PDBsum" id="8YW9"/>
<dbReference type="PDBsum" id="9KNW"/>
<dbReference type="PDBsum" id="9KNX"/>
<dbReference type="PDBsum" id="9KNY"/>
<dbReference type="PDBsum" id="9MNW"/>
<dbReference type="PDBsum" id="9MNX"/>
<dbReference type="PDBsum" id="9MNY"/>
<dbReference type="PDBsum" id="9MNZ"/>
<dbReference type="PDBsum" id="9MO0"/>
<dbReference type="EMDB" id="EMD-39624"/>
<dbReference type="EMDB" id="EMD-39625"/>
<dbReference type="EMDB" id="EMD-39626"/>
<dbReference type="EMDB" id="EMD-48441"/>
<dbReference type="EMDB" id="EMD-48442"/>
<dbReference type="EMDB" id="EMD-48443"/>
<dbReference type="EMDB" id="EMD-48444"/>
<dbReference type="EMDB" id="EMD-48445"/>
<dbReference type="EMDB" id="EMD-62464"/>
<dbReference type="EMDB" id="EMD-62465"/>
<dbReference type="EMDB" id="EMD-62466"/>
<dbReference type="SMR" id="O95563"/>
<dbReference type="BioGRID" id="117389">
    <property type="interactions" value="63"/>
</dbReference>
<dbReference type="ComplexPortal" id="CPX-6154">
    <property type="entry name" value="Mitochondrial pyruvate carrier complex"/>
</dbReference>
<dbReference type="ComplexPortal" id="CPX-8062">
    <property type="entry name" value="Mitochondrial pyruvate carrier complex, testis variant"/>
</dbReference>
<dbReference type="CORUM" id="O95563"/>
<dbReference type="FunCoup" id="O95563">
    <property type="interactions" value="975"/>
</dbReference>
<dbReference type="IntAct" id="O95563">
    <property type="interactions" value="49"/>
</dbReference>
<dbReference type="MINT" id="O95563"/>
<dbReference type="STRING" id="9606.ENSP00000271373"/>
<dbReference type="BindingDB" id="O95563"/>
<dbReference type="ChEMBL" id="CHEMBL4295686"/>
<dbReference type="DrugCentral" id="O95563"/>
<dbReference type="GuidetoPHARMACOLOGY" id="3023"/>
<dbReference type="TCDB" id="2.A.105.1.2">
    <property type="family name" value="the mitochondrial pyruvate carrier (mpc) family"/>
</dbReference>
<dbReference type="GlyGen" id="O95563">
    <property type="glycosylation" value="1 site, 1 O-linked glycan (1 site)"/>
</dbReference>
<dbReference type="iPTMnet" id="O95563"/>
<dbReference type="PhosphoSitePlus" id="O95563"/>
<dbReference type="SwissPalm" id="O95563"/>
<dbReference type="BioMuta" id="MPC2"/>
<dbReference type="jPOST" id="O95563"/>
<dbReference type="MassIVE" id="O95563"/>
<dbReference type="PaxDb" id="9606-ENSP00000356820"/>
<dbReference type="PeptideAtlas" id="O95563"/>
<dbReference type="ProteomicsDB" id="50942"/>
<dbReference type="Pumba" id="O95563"/>
<dbReference type="TopDownProteomics" id="O95563"/>
<dbReference type="Antibodypedia" id="34345">
    <property type="antibodies" value="213 antibodies from 26 providers"/>
</dbReference>
<dbReference type="DNASU" id="25874"/>
<dbReference type="Ensembl" id="ENST00000271373.9">
    <property type="protein sequence ID" value="ENSP00000271373.4"/>
    <property type="gene ID" value="ENSG00000143158.11"/>
</dbReference>
<dbReference type="Ensembl" id="ENST00000367846.8">
    <property type="protein sequence ID" value="ENSP00000356820.4"/>
    <property type="gene ID" value="ENSG00000143158.11"/>
</dbReference>
<dbReference type="GeneID" id="25874"/>
<dbReference type="KEGG" id="hsa:25874"/>
<dbReference type="MANE-Select" id="ENST00000271373.9">
    <property type="protein sequence ID" value="ENSP00000271373.4"/>
    <property type="RefSeq nucleotide sequence ID" value="NM_001143674.4"/>
    <property type="RefSeq protein sequence ID" value="NP_001137146.1"/>
</dbReference>
<dbReference type="UCSC" id="uc001ges.4">
    <property type="organism name" value="human"/>
</dbReference>
<dbReference type="AGR" id="HGNC:24515"/>
<dbReference type="CTD" id="25874"/>
<dbReference type="DisGeNET" id="25874"/>
<dbReference type="GeneCards" id="MPC2"/>
<dbReference type="HGNC" id="HGNC:24515">
    <property type="gene designation" value="MPC2"/>
</dbReference>
<dbReference type="HPA" id="ENSG00000143158">
    <property type="expression patterns" value="Low tissue specificity"/>
</dbReference>
<dbReference type="MIM" id="614737">
    <property type="type" value="gene"/>
</dbReference>
<dbReference type="neXtProt" id="NX_O95563"/>
<dbReference type="OpenTargets" id="ENSG00000143158"/>
<dbReference type="PharmGKB" id="PA142672547"/>
<dbReference type="VEuPathDB" id="HostDB:ENSG00000143158"/>
<dbReference type="eggNOG" id="KOG1589">
    <property type="taxonomic scope" value="Eukaryota"/>
</dbReference>
<dbReference type="GeneTree" id="ENSGT00510000047120"/>
<dbReference type="InParanoid" id="O95563"/>
<dbReference type="OMA" id="PQQFAIC"/>
<dbReference type="OrthoDB" id="869189at2759"/>
<dbReference type="PAN-GO" id="O95563">
    <property type="GO annotations" value="3 GO annotations based on evolutionary models"/>
</dbReference>
<dbReference type="PhylomeDB" id="O95563"/>
<dbReference type="TreeFam" id="TF300066"/>
<dbReference type="PathwayCommons" id="O95563"/>
<dbReference type="Reactome" id="R-HSA-70268">
    <property type="pathway name" value="Pyruvate metabolism"/>
</dbReference>
<dbReference type="SignaLink" id="O95563"/>
<dbReference type="BioGRID-ORCS" id="25874">
    <property type="hits" value="23 hits in 1160 CRISPR screens"/>
</dbReference>
<dbReference type="ChiTaRS" id="MPC2">
    <property type="organism name" value="human"/>
</dbReference>
<dbReference type="GeneWiki" id="BRP44"/>
<dbReference type="GenomeRNAi" id="25874"/>
<dbReference type="Pharos" id="O95563">
    <property type="development level" value="Tbio"/>
</dbReference>
<dbReference type="PRO" id="PR:O95563"/>
<dbReference type="Proteomes" id="UP000005640">
    <property type="component" value="Chromosome 1"/>
</dbReference>
<dbReference type="RNAct" id="O95563">
    <property type="molecule type" value="protein"/>
</dbReference>
<dbReference type="Bgee" id="ENSG00000143158">
    <property type="expression patterns" value="Expressed in sperm and 209 other cell types or tissues"/>
</dbReference>
<dbReference type="ExpressionAtlas" id="O95563">
    <property type="expression patterns" value="baseline and differential"/>
</dbReference>
<dbReference type="GO" id="GO:0098800">
    <property type="term" value="C:inner mitochondrial membrane protein complex"/>
    <property type="evidence" value="ECO:0000250"/>
    <property type="project" value="ComplexPortal"/>
</dbReference>
<dbReference type="GO" id="GO:0005743">
    <property type="term" value="C:mitochondrial inner membrane"/>
    <property type="evidence" value="ECO:0000314"/>
    <property type="project" value="UniProtKB"/>
</dbReference>
<dbReference type="GO" id="GO:0005739">
    <property type="term" value="C:mitochondrion"/>
    <property type="evidence" value="ECO:0000314"/>
    <property type="project" value="LIFEdb"/>
</dbReference>
<dbReference type="GO" id="GO:0005634">
    <property type="term" value="C:nucleus"/>
    <property type="evidence" value="ECO:0007005"/>
    <property type="project" value="UniProtKB"/>
</dbReference>
<dbReference type="GO" id="GO:0042802">
    <property type="term" value="F:identical protein binding"/>
    <property type="evidence" value="ECO:0000353"/>
    <property type="project" value="IntAct"/>
</dbReference>
<dbReference type="GO" id="GO:0050833">
    <property type="term" value="F:pyruvate transmembrane transporter activity"/>
    <property type="evidence" value="ECO:0000318"/>
    <property type="project" value="GO_Central"/>
</dbReference>
<dbReference type="GO" id="GO:0006850">
    <property type="term" value="P:mitochondrial pyruvate transmembrane transport"/>
    <property type="evidence" value="ECO:0000314"/>
    <property type="project" value="UniProtKB"/>
</dbReference>
<dbReference type="GO" id="GO:0035774">
    <property type="term" value="P:positive regulation of insulin secretion involved in cellular response to glucose stimulus"/>
    <property type="evidence" value="ECO:0007669"/>
    <property type="project" value="Ensembl"/>
</dbReference>
<dbReference type="GO" id="GO:0006086">
    <property type="term" value="P:pyruvate decarboxylation to acetyl-CoA"/>
    <property type="evidence" value="ECO:0007669"/>
    <property type="project" value="Ensembl"/>
</dbReference>
<dbReference type="InterPro" id="IPR005336">
    <property type="entry name" value="MPC"/>
</dbReference>
<dbReference type="PANTHER" id="PTHR14154">
    <property type="entry name" value="UPF0041 BRAIN PROTEIN 44-RELATED"/>
    <property type="match status" value="1"/>
</dbReference>
<dbReference type="Pfam" id="PF03650">
    <property type="entry name" value="MPC"/>
    <property type="match status" value="1"/>
</dbReference>
<feature type="chain" id="PRO_0000212793" description="Mitochondrial pyruvate carrier 2">
    <location>
        <begin position="1"/>
        <end position="127"/>
    </location>
</feature>
<feature type="topological domain" description="Mitochondrial matrix" evidence="8">
    <location>
        <begin position="2"/>
        <end position="40"/>
    </location>
</feature>
<feature type="transmembrane region" description="Helical" evidence="1">
    <location>
        <begin position="41"/>
        <end position="61"/>
    </location>
</feature>
<feature type="topological domain" description="Mitochondrial intermembrane" evidence="8">
    <location>
        <begin position="62"/>
        <end position="72"/>
    </location>
</feature>
<feature type="transmembrane region" description="Helical" evidence="1">
    <location>
        <begin position="73"/>
        <end position="90"/>
    </location>
</feature>
<feature type="topological domain" description="Mitochondrial matrix" evidence="8">
    <location>
        <begin position="91"/>
        <end position="95"/>
    </location>
</feature>
<feature type="transmembrane region" description="Helical" evidence="1">
    <location>
        <begin position="96"/>
        <end position="115"/>
    </location>
</feature>
<feature type="topological domain" description="Mitochondrial intermembrane" evidence="8">
    <location>
        <begin position="116"/>
        <end position="127"/>
    </location>
</feature>
<organism>
    <name type="scientific">Homo sapiens</name>
    <name type="common">Human</name>
    <dbReference type="NCBI Taxonomy" id="9606"/>
    <lineage>
        <taxon>Eukaryota</taxon>
        <taxon>Metazoa</taxon>
        <taxon>Chordata</taxon>
        <taxon>Craniata</taxon>
        <taxon>Vertebrata</taxon>
        <taxon>Euteleostomi</taxon>
        <taxon>Mammalia</taxon>
        <taxon>Eutheria</taxon>
        <taxon>Euarchontoglires</taxon>
        <taxon>Primates</taxon>
        <taxon>Haplorrhini</taxon>
        <taxon>Catarrhini</taxon>
        <taxon>Hominidae</taxon>
        <taxon>Homo</taxon>
    </lineage>
</organism>
<sequence length="127" mass="14279">MSAAGARGLRATYHRLLDKVELMLPEKLRPLYNHPAGPRTVFFWAPIMKWGLVCAGLADMARPAEKLSTAQSAVLMATGFIWSRYSLVIIPKNWSLFAVNFFVGAAGASQLFRIWRYNQELKAKAHK</sequence>
<protein>
    <recommendedName>
        <fullName>Mitochondrial pyruvate carrier 2</fullName>
    </recommendedName>
    <alternativeName>
        <fullName>Brain protein 44</fullName>
    </alternativeName>
</protein>
<reference key="1">
    <citation type="submission" date="1999-01" db="EMBL/GenBank/DDBJ databases">
        <authorList>
            <person name="Rhodes S."/>
        </authorList>
    </citation>
    <scope>NUCLEOTIDE SEQUENCE [LARGE SCALE MRNA]</scope>
</reference>
<reference key="2">
    <citation type="journal article" date="2001" name="Genome Res.">
        <title>Towards a catalog of human genes and proteins: sequencing and analysis of 500 novel complete protein coding human cDNAs.</title>
        <authorList>
            <person name="Wiemann S."/>
            <person name="Weil B."/>
            <person name="Wellenreuther R."/>
            <person name="Gassenhuber J."/>
            <person name="Glassl S."/>
            <person name="Ansorge W."/>
            <person name="Boecher M."/>
            <person name="Bloecker H."/>
            <person name="Bauersachs S."/>
            <person name="Blum H."/>
            <person name="Lauber J."/>
            <person name="Duesterhoeft A."/>
            <person name="Beyer A."/>
            <person name="Koehrer K."/>
            <person name="Strack N."/>
            <person name="Mewes H.-W."/>
            <person name="Ottenwaelder B."/>
            <person name="Obermaier B."/>
            <person name="Tampe J."/>
            <person name="Heubner D."/>
            <person name="Wambutt R."/>
            <person name="Korn B."/>
            <person name="Klein M."/>
            <person name="Poustka A."/>
        </authorList>
    </citation>
    <scope>NUCLEOTIDE SEQUENCE [LARGE SCALE MRNA]</scope>
    <source>
        <tissue>Brain</tissue>
    </source>
</reference>
<reference key="3">
    <citation type="journal article" date="2004" name="Nat. Genet.">
        <title>Complete sequencing and characterization of 21,243 full-length human cDNAs.</title>
        <authorList>
            <person name="Ota T."/>
            <person name="Suzuki Y."/>
            <person name="Nishikawa T."/>
            <person name="Otsuki T."/>
            <person name="Sugiyama T."/>
            <person name="Irie R."/>
            <person name="Wakamatsu A."/>
            <person name="Hayashi K."/>
            <person name="Sato H."/>
            <person name="Nagai K."/>
            <person name="Kimura K."/>
            <person name="Makita H."/>
            <person name="Sekine M."/>
            <person name="Obayashi M."/>
            <person name="Nishi T."/>
            <person name="Shibahara T."/>
            <person name="Tanaka T."/>
            <person name="Ishii S."/>
            <person name="Yamamoto J."/>
            <person name="Saito K."/>
            <person name="Kawai Y."/>
            <person name="Isono Y."/>
            <person name="Nakamura Y."/>
            <person name="Nagahari K."/>
            <person name="Murakami K."/>
            <person name="Yasuda T."/>
            <person name="Iwayanagi T."/>
            <person name="Wagatsuma M."/>
            <person name="Shiratori A."/>
            <person name="Sudo H."/>
            <person name="Hosoiri T."/>
            <person name="Kaku Y."/>
            <person name="Kodaira H."/>
            <person name="Kondo H."/>
            <person name="Sugawara M."/>
            <person name="Takahashi M."/>
            <person name="Kanda K."/>
            <person name="Yokoi T."/>
            <person name="Furuya T."/>
            <person name="Kikkawa E."/>
            <person name="Omura Y."/>
            <person name="Abe K."/>
            <person name="Kamihara K."/>
            <person name="Katsuta N."/>
            <person name="Sato K."/>
            <person name="Tanikawa M."/>
            <person name="Yamazaki M."/>
            <person name="Ninomiya K."/>
            <person name="Ishibashi T."/>
            <person name="Yamashita H."/>
            <person name="Murakawa K."/>
            <person name="Fujimori K."/>
            <person name="Tanai H."/>
            <person name="Kimata M."/>
            <person name="Watanabe M."/>
            <person name="Hiraoka S."/>
            <person name="Chiba Y."/>
            <person name="Ishida S."/>
            <person name="Ono Y."/>
            <person name="Takiguchi S."/>
            <person name="Watanabe S."/>
            <person name="Yosida M."/>
            <person name="Hotuta T."/>
            <person name="Kusano J."/>
            <person name="Kanehori K."/>
            <person name="Takahashi-Fujii A."/>
            <person name="Hara H."/>
            <person name="Tanase T.-O."/>
            <person name="Nomura Y."/>
            <person name="Togiya S."/>
            <person name="Komai F."/>
            <person name="Hara R."/>
            <person name="Takeuchi K."/>
            <person name="Arita M."/>
            <person name="Imose N."/>
            <person name="Musashino K."/>
            <person name="Yuuki H."/>
            <person name="Oshima A."/>
            <person name="Sasaki N."/>
            <person name="Aotsuka S."/>
            <person name="Yoshikawa Y."/>
            <person name="Matsunawa H."/>
            <person name="Ichihara T."/>
            <person name="Shiohata N."/>
            <person name="Sano S."/>
            <person name="Moriya S."/>
            <person name="Momiyama H."/>
            <person name="Satoh N."/>
            <person name="Takami S."/>
            <person name="Terashima Y."/>
            <person name="Suzuki O."/>
            <person name="Nakagawa S."/>
            <person name="Senoh A."/>
            <person name="Mizoguchi H."/>
            <person name="Goto Y."/>
            <person name="Shimizu F."/>
            <person name="Wakebe H."/>
            <person name="Hishigaki H."/>
            <person name="Watanabe T."/>
            <person name="Sugiyama A."/>
            <person name="Takemoto M."/>
            <person name="Kawakami B."/>
            <person name="Yamazaki M."/>
            <person name="Watanabe K."/>
            <person name="Kumagai A."/>
            <person name="Itakura S."/>
            <person name="Fukuzumi Y."/>
            <person name="Fujimori Y."/>
            <person name="Komiyama M."/>
            <person name="Tashiro H."/>
            <person name="Tanigami A."/>
            <person name="Fujiwara T."/>
            <person name="Ono T."/>
            <person name="Yamada K."/>
            <person name="Fujii Y."/>
            <person name="Ozaki K."/>
            <person name="Hirao M."/>
            <person name="Ohmori Y."/>
            <person name="Kawabata A."/>
            <person name="Hikiji T."/>
            <person name="Kobatake N."/>
            <person name="Inagaki H."/>
            <person name="Ikema Y."/>
            <person name="Okamoto S."/>
            <person name="Okitani R."/>
            <person name="Kawakami T."/>
            <person name="Noguchi S."/>
            <person name="Itoh T."/>
            <person name="Shigeta K."/>
            <person name="Senba T."/>
            <person name="Matsumura K."/>
            <person name="Nakajima Y."/>
            <person name="Mizuno T."/>
            <person name="Morinaga M."/>
            <person name="Sasaki M."/>
            <person name="Togashi T."/>
            <person name="Oyama M."/>
            <person name="Hata H."/>
            <person name="Watanabe M."/>
            <person name="Komatsu T."/>
            <person name="Mizushima-Sugano J."/>
            <person name="Satoh T."/>
            <person name="Shirai Y."/>
            <person name="Takahashi Y."/>
            <person name="Nakagawa K."/>
            <person name="Okumura K."/>
            <person name="Nagase T."/>
            <person name="Nomura N."/>
            <person name="Kikuchi H."/>
            <person name="Masuho Y."/>
            <person name="Yamashita R."/>
            <person name="Nakai K."/>
            <person name="Yada T."/>
            <person name="Nakamura Y."/>
            <person name="Ohara O."/>
            <person name="Isogai T."/>
            <person name="Sugano S."/>
        </authorList>
    </citation>
    <scope>NUCLEOTIDE SEQUENCE [LARGE SCALE MRNA]</scope>
    <source>
        <tissue>Thalamus</tissue>
    </source>
</reference>
<reference key="4">
    <citation type="submission" date="2004-06" db="EMBL/GenBank/DDBJ databases">
        <title>Cloning of human full open reading frames in Gateway(TM) system entry vector (pDONR201).</title>
        <authorList>
            <person name="Ebert L."/>
            <person name="Schick M."/>
            <person name="Neubert P."/>
            <person name="Schatten R."/>
            <person name="Henze S."/>
            <person name="Korn B."/>
        </authorList>
    </citation>
    <scope>NUCLEOTIDE SEQUENCE [LARGE SCALE MRNA]</scope>
</reference>
<reference key="5">
    <citation type="journal article" date="2006" name="Nature">
        <title>The DNA sequence and biological annotation of human chromosome 1.</title>
        <authorList>
            <person name="Gregory S.G."/>
            <person name="Barlow K.F."/>
            <person name="McLay K.E."/>
            <person name="Kaul R."/>
            <person name="Swarbreck D."/>
            <person name="Dunham A."/>
            <person name="Scott C.E."/>
            <person name="Howe K.L."/>
            <person name="Woodfine K."/>
            <person name="Spencer C.C.A."/>
            <person name="Jones M.C."/>
            <person name="Gillson C."/>
            <person name="Searle S."/>
            <person name="Zhou Y."/>
            <person name="Kokocinski F."/>
            <person name="McDonald L."/>
            <person name="Evans R."/>
            <person name="Phillips K."/>
            <person name="Atkinson A."/>
            <person name="Cooper R."/>
            <person name="Jones C."/>
            <person name="Hall R.E."/>
            <person name="Andrews T.D."/>
            <person name="Lloyd C."/>
            <person name="Ainscough R."/>
            <person name="Almeida J.P."/>
            <person name="Ambrose K.D."/>
            <person name="Anderson F."/>
            <person name="Andrew R.W."/>
            <person name="Ashwell R.I.S."/>
            <person name="Aubin K."/>
            <person name="Babbage A.K."/>
            <person name="Bagguley C.L."/>
            <person name="Bailey J."/>
            <person name="Beasley H."/>
            <person name="Bethel G."/>
            <person name="Bird C.P."/>
            <person name="Bray-Allen S."/>
            <person name="Brown J.Y."/>
            <person name="Brown A.J."/>
            <person name="Buckley D."/>
            <person name="Burton J."/>
            <person name="Bye J."/>
            <person name="Carder C."/>
            <person name="Chapman J.C."/>
            <person name="Clark S.Y."/>
            <person name="Clarke G."/>
            <person name="Clee C."/>
            <person name="Cobley V."/>
            <person name="Collier R.E."/>
            <person name="Corby N."/>
            <person name="Coville G.J."/>
            <person name="Davies J."/>
            <person name="Deadman R."/>
            <person name="Dunn M."/>
            <person name="Earthrowl M."/>
            <person name="Ellington A.G."/>
            <person name="Errington H."/>
            <person name="Frankish A."/>
            <person name="Frankland J."/>
            <person name="French L."/>
            <person name="Garner P."/>
            <person name="Garnett J."/>
            <person name="Gay L."/>
            <person name="Ghori M.R.J."/>
            <person name="Gibson R."/>
            <person name="Gilby L.M."/>
            <person name="Gillett W."/>
            <person name="Glithero R.J."/>
            <person name="Grafham D.V."/>
            <person name="Griffiths C."/>
            <person name="Griffiths-Jones S."/>
            <person name="Grocock R."/>
            <person name="Hammond S."/>
            <person name="Harrison E.S.I."/>
            <person name="Hart E."/>
            <person name="Haugen E."/>
            <person name="Heath P.D."/>
            <person name="Holmes S."/>
            <person name="Holt K."/>
            <person name="Howden P.J."/>
            <person name="Hunt A.R."/>
            <person name="Hunt S.E."/>
            <person name="Hunter G."/>
            <person name="Isherwood J."/>
            <person name="James R."/>
            <person name="Johnson C."/>
            <person name="Johnson D."/>
            <person name="Joy A."/>
            <person name="Kay M."/>
            <person name="Kershaw J.K."/>
            <person name="Kibukawa M."/>
            <person name="Kimberley A.M."/>
            <person name="King A."/>
            <person name="Knights A.J."/>
            <person name="Lad H."/>
            <person name="Laird G."/>
            <person name="Lawlor S."/>
            <person name="Leongamornlert D.A."/>
            <person name="Lloyd D.M."/>
            <person name="Loveland J."/>
            <person name="Lovell J."/>
            <person name="Lush M.J."/>
            <person name="Lyne R."/>
            <person name="Martin S."/>
            <person name="Mashreghi-Mohammadi M."/>
            <person name="Matthews L."/>
            <person name="Matthews N.S.W."/>
            <person name="McLaren S."/>
            <person name="Milne S."/>
            <person name="Mistry S."/>
            <person name="Moore M.J.F."/>
            <person name="Nickerson T."/>
            <person name="O'Dell C.N."/>
            <person name="Oliver K."/>
            <person name="Palmeiri A."/>
            <person name="Palmer S.A."/>
            <person name="Parker A."/>
            <person name="Patel D."/>
            <person name="Pearce A.V."/>
            <person name="Peck A.I."/>
            <person name="Pelan S."/>
            <person name="Phelps K."/>
            <person name="Phillimore B.J."/>
            <person name="Plumb R."/>
            <person name="Rajan J."/>
            <person name="Raymond C."/>
            <person name="Rouse G."/>
            <person name="Saenphimmachak C."/>
            <person name="Sehra H.K."/>
            <person name="Sheridan E."/>
            <person name="Shownkeen R."/>
            <person name="Sims S."/>
            <person name="Skuce C.D."/>
            <person name="Smith M."/>
            <person name="Steward C."/>
            <person name="Subramanian S."/>
            <person name="Sycamore N."/>
            <person name="Tracey A."/>
            <person name="Tromans A."/>
            <person name="Van Helmond Z."/>
            <person name="Wall M."/>
            <person name="Wallis J.M."/>
            <person name="White S."/>
            <person name="Whitehead S.L."/>
            <person name="Wilkinson J.E."/>
            <person name="Willey D.L."/>
            <person name="Williams H."/>
            <person name="Wilming L."/>
            <person name="Wray P.W."/>
            <person name="Wu Z."/>
            <person name="Coulson A."/>
            <person name="Vaudin M."/>
            <person name="Sulston J.E."/>
            <person name="Durbin R.M."/>
            <person name="Hubbard T."/>
            <person name="Wooster R."/>
            <person name="Dunham I."/>
            <person name="Carter N.P."/>
            <person name="McVean G."/>
            <person name="Ross M.T."/>
            <person name="Harrow J."/>
            <person name="Olson M.V."/>
            <person name="Beck S."/>
            <person name="Rogers J."/>
            <person name="Bentley D.R."/>
        </authorList>
    </citation>
    <scope>NUCLEOTIDE SEQUENCE [LARGE SCALE GENOMIC DNA]</scope>
</reference>
<reference key="6">
    <citation type="submission" date="2005-07" db="EMBL/GenBank/DDBJ databases">
        <authorList>
            <person name="Mural R.J."/>
            <person name="Istrail S."/>
            <person name="Sutton G.G."/>
            <person name="Florea L."/>
            <person name="Halpern A.L."/>
            <person name="Mobarry C.M."/>
            <person name="Lippert R."/>
            <person name="Walenz B."/>
            <person name="Shatkay H."/>
            <person name="Dew I."/>
            <person name="Miller J.R."/>
            <person name="Flanigan M.J."/>
            <person name="Edwards N.J."/>
            <person name="Bolanos R."/>
            <person name="Fasulo D."/>
            <person name="Halldorsson B.V."/>
            <person name="Hannenhalli S."/>
            <person name="Turner R."/>
            <person name="Yooseph S."/>
            <person name="Lu F."/>
            <person name="Nusskern D.R."/>
            <person name="Shue B.C."/>
            <person name="Zheng X.H."/>
            <person name="Zhong F."/>
            <person name="Delcher A.L."/>
            <person name="Huson D.H."/>
            <person name="Kravitz S.A."/>
            <person name="Mouchard L."/>
            <person name="Reinert K."/>
            <person name="Remington K.A."/>
            <person name="Clark A.G."/>
            <person name="Waterman M.S."/>
            <person name="Eichler E.E."/>
            <person name="Adams M.D."/>
            <person name="Hunkapiller M.W."/>
            <person name="Myers E.W."/>
            <person name="Venter J.C."/>
        </authorList>
    </citation>
    <scope>NUCLEOTIDE SEQUENCE [LARGE SCALE GENOMIC DNA]</scope>
</reference>
<reference key="7">
    <citation type="journal article" date="2004" name="Genome Res.">
        <title>The status, quality, and expansion of the NIH full-length cDNA project: the Mammalian Gene Collection (MGC).</title>
        <authorList>
            <consortium name="The MGC Project Team"/>
        </authorList>
    </citation>
    <scope>NUCLEOTIDE SEQUENCE [LARGE SCALE MRNA]</scope>
</reference>
<reference key="8">
    <citation type="journal article" date="2011" name="BMC Syst. Biol.">
        <title>Initial characterization of the human central proteome.</title>
        <authorList>
            <person name="Burkard T.R."/>
            <person name="Planyavsky M."/>
            <person name="Kaupe I."/>
            <person name="Breitwieser F.P."/>
            <person name="Buerckstuemmer T."/>
            <person name="Bennett K.L."/>
            <person name="Superti-Furga G."/>
            <person name="Colinge J."/>
        </authorList>
    </citation>
    <scope>IDENTIFICATION BY MASS SPECTROMETRY [LARGE SCALE ANALYSIS]</scope>
</reference>
<reference key="9">
    <citation type="journal article" date="2012" name="Science">
        <title>A mitochondrial pyruvate carrier required for pyruvate uptake in yeast, Drosophila, and humans.</title>
        <authorList>
            <person name="Bricker D.K."/>
            <person name="Taylor E.B."/>
            <person name="Schell J.C."/>
            <person name="Orsak T."/>
            <person name="Boutron A."/>
            <person name="Chen Y.C."/>
            <person name="Cox J.E."/>
            <person name="Cardon C.M."/>
            <person name="Van Vranken J.G."/>
            <person name="Dephoure N."/>
            <person name="Redin C."/>
            <person name="Boudina S."/>
            <person name="Gygi S.P."/>
            <person name="Brivet M."/>
            <person name="Thummel C.S."/>
            <person name="Rutter J."/>
        </authorList>
    </citation>
    <scope>FUNCTION</scope>
    <scope>SUBCELLULAR LOCATION</scope>
    <scope>TRANSPORTER ACTIVITY</scope>
</reference>
<reference key="10">
    <citation type="journal article" date="2015" name="Mol. Cell">
        <title>Monitoring Mitochondrial Pyruvate Carrier Activity in Real Time Using a BRET-Based Biosensor: Investigation of the Warburg Effect.</title>
        <authorList>
            <person name="Compan V."/>
            <person name="Pierredon S."/>
            <person name="Vanderperre B."/>
            <person name="Krznar P."/>
            <person name="Marchiq I."/>
            <person name="Zamboni N."/>
            <person name="Pouyssegur J."/>
            <person name="Martinou J.C."/>
        </authorList>
    </citation>
    <scope>FUNCTION</scope>
    <scope>TRANSPORTER ACTIVITY</scope>
    <scope>SUBUNIT</scope>
    <scope>SUBCELLULAR LOCATION</scope>
</reference>
<reference key="11">
    <citation type="journal article" date="2015" name="Proteomics">
        <title>N-terminome analysis of the human mitochondrial proteome.</title>
        <authorList>
            <person name="Vaca Jacome A.S."/>
            <person name="Rabilloud T."/>
            <person name="Schaeffer-Reiss C."/>
            <person name="Rompais M."/>
            <person name="Ayoub D."/>
            <person name="Lane L."/>
            <person name="Bairoch A."/>
            <person name="Van Dorsselaer A."/>
            <person name="Carapito C."/>
        </authorList>
    </citation>
    <scope>IDENTIFICATION BY MASS SPECTROMETRY [LARGE SCALE ANALYSIS]</scope>
</reference>
<reference key="12">
    <citation type="journal article" date="2016" name="J. Biol. Chem.">
        <title>MPC1-like Is a Placental Mammal-specific Mitochondrial Pyruvate Carrier Subunit Expressed in Postmeiotic Male Germ Cells.</title>
        <authorList>
            <person name="Vanderperre B."/>
            <person name="Cermakova K."/>
            <person name="Escoffier J."/>
            <person name="Kaba M."/>
            <person name="Bender T."/>
            <person name="Nef S."/>
            <person name="Martinou J.C."/>
        </authorList>
    </citation>
    <scope>FUNCTION</scope>
    <scope>TRANSPORTER ACTIVITY</scope>
    <scope>SUBUNIT</scope>
    <scope>TOPOLOGY</scope>
</reference>
<reference key="13">
    <citation type="journal article" date="2018" name="Sci. Rep.">
        <title>Human mitochondrial pyruvate carrier 2 as an autonomous membrane transporter.</title>
        <authorList>
            <person name="Nagampalli R.S.K."/>
            <person name="Quesnay J.E.N."/>
            <person name="Adamoski D."/>
            <person name="Islam Z."/>
            <person name="Birch J."/>
            <person name="Sebinelli H.G."/>
            <person name="Girard R.M.B.M."/>
            <person name="Ascencao C.F.R."/>
            <person name="Fala A.M."/>
            <person name="Pauletti B.A."/>
            <person name="Consonni S.R."/>
            <person name="de Oliveira J.F."/>
            <person name="Silva A.C.T."/>
            <person name="Franchini K.G."/>
            <person name="Leme A.F.P."/>
            <person name="Silber A.M."/>
            <person name="Ciancaglini P."/>
            <person name="Moraes I."/>
            <person name="Dias S.M.G."/>
            <person name="Ambrosio A.L.B."/>
        </authorList>
    </citation>
    <scope>FUNCTION</scope>
    <scope>TRANSPORTER ACTIVITY</scope>
    <scope>SUBUNIT</scope>
    <scope>BIOPHYSICOCHEMICAL PROPERTIES</scope>
</reference>
<reference key="14">
    <citation type="journal article" date="2020" name="Int. J. Mol. Sci.">
        <title>Characteristic Analysis of Homo- and Heterodimeric Complexes of Human Mitochondrial Pyruvate Carrier Related to Metabolic Diseases.</title>
        <authorList>
            <person name="Lee J."/>
            <person name="Jin Z."/>
            <person name="Lee D."/>
            <person name="Yun J.H."/>
            <person name="Lee W."/>
        </authorList>
    </citation>
    <scope>SUBUNIT</scope>
</reference>
<keyword id="KW-0002">3D-structure</keyword>
<keyword id="KW-0472">Membrane</keyword>
<keyword id="KW-0496">Mitochondrion</keyword>
<keyword id="KW-0999">Mitochondrion inner membrane</keyword>
<keyword id="KW-1267">Proteomics identification</keyword>
<keyword id="KW-1185">Reference proteome</keyword>
<keyword id="KW-0812">Transmembrane</keyword>
<keyword id="KW-1133">Transmembrane helix</keyword>
<keyword id="KW-0813">Transport</keyword>
<proteinExistence type="evidence at protein level"/>